<gene>
    <name evidence="1" type="primary">rnpA</name>
    <name type="ordered locus">Hhal_1229</name>
</gene>
<dbReference type="EC" id="3.1.26.5" evidence="1"/>
<dbReference type="EMBL" id="CP000544">
    <property type="protein sequence ID" value="ABM62004.1"/>
    <property type="molecule type" value="Genomic_DNA"/>
</dbReference>
<dbReference type="RefSeq" id="WP_011814027.1">
    <property type="nucleotide sequence ID" value="NC_008789.1"/>
</dbReference>
<dbReference type="SMR" id="A1WWE2"/>
<dbReference type="STRING" id="349124.Hhal_1229"/>
<dbReference type="KEGG" id="hha:Hhal_1229"/>
<dbReference type="eggNOG" id="COG0594">
    <property type="taxonomic scope" value="Bacteria"/>
</dbReference>
<dbReference type="HOGENOM" id="CLU_117179_11_0_6"/>
<dbReference type="Proteomes" id="UP000000647">
    <property type="component" value="Chromosome"/>
</dbReference>
<dbReference type="GO" id="GO:0030677">
    <property type="term" value="C:ribonuclease P complex"/>
    <property type="evidence" value="ECO:0007669"/>
    <property type="project" value="TreeGrafter"/>
</dbReference>
<dbReference type="GO" id="GO:0042781">
    <property type="term" value="F:3'-tRNA processing endoribonuclease activity"/>
    <property type="evidence" value="ECO:0007669"/>
    <property type="project" value="TreeGrafter"/>
</dbReference>
<dbReference type="GO" id="GO:0004526">
    <property type="term" value="F:ribonuclease P activity"/>
    <property type="evidence" value="ECO:0007669"/>
    <property type="project" value="UniProtKB-UniRule"/>
</dbReference>
<dbReference type="GO" id="GO:0000049">
    <property type="term" value="F:tRNA binding"/>
    <property type="evidence" value="ECO:0007669"/>
    <property type="project" value="UniProtKB-UniRule"/>
</dbReference>
<dbReference type="GO" id="GO:0001682">
    <property type="term" value="P:tRNA 5'-leader removal"/>
    <property type="evidence" value="ECO:0007669"/>
    <property type="project" value="UniProtKB-UniRule"/>
</dbReference>
<dbReference type="Gene3D" id="3.30.230.10">
    <property type="match status" value="1"/>
</dbReference>
<dbReference type="HAMAP" id="MF_00227">
    <property type="entry name" value="RNase_P"/>
    <property type="match status" value="1"/>
</dbReference>
<dbReference type="InterPro" id="IPR020568">
    <property type="entry name" value="Ribosomal_Su5_D2-typ_SF"/>
</dbReference>
<dbReference type="InterPro" id="IPR014721">
    <property type="entry name" value="Ribsml_uS5_D2-typ_fold_subgr"/>
</dbReference>
<dbReference type="InterPro" id="IPR000100">
    <property type="entry name" value="RNase_P"/>
</dbReference>
<dbReference type="InterPro" id="IPR020539">
    <property type="entry name" value="RNase_P_CS"/>
</dbReference>
<dbReference type="NCBIfam" id="TIGR00188">
    <property type="entry name" value="rnpA"/>
    <property type="match status" value="1"/>
</dbReference>
<dbReference type="PANTHER" id="PTHR33992">
    <property type="entry name" value="RIBONUCLEASE P PROTEIN COMPONENT"/>
    <property type="match status" value="1"/>
</dbReference>
<dbReference type="PANTHER" id="PTHR33992:SF1">
    <property type="entry name" value="RIBONUCLEASE P PROTEIN COMPONENT"/>
    <property type="match status" value="1"/>
</dbReference>
<dbReference type="Pfam" id="PF00825">
    <property type="entry name" value="Ribonuclease_P"/>
    <property type="match status" value="1"/>
</dbReference>
<dbReference type="SUPFAM" id="SSF54211">
    <property type="entry name" value="Ribosomal protein S5 domain 2-like"/>
    <property type="match status" value="1"/>
</dbReference>
<dbReference type="PROSITE" id="PS00648">
    <property type="entry name" value="RIBONUCLEASE_P"/>
    <property type="match status" value="1"/>
</dbReference>
<proteinExistence type="inferred from homology"/>
<evidence type="ECO:0000255" key="1">
    <source>
        <dbReference type="HAMAP-Rule" id="MF_00227"/>
    </source>
</evidence>
<feature type="chain" id="PRO_1000194646" description="Ribonuclease P protein component">
    <location>
        <begin position="1"/>
        <end position="122"/>
    </location>
</feature>
<reference key="1">
    <citation type="submission" date="2006-12" db="EMBL/GenBank/DDBJ databases">
        <title>Complete sequence of Halorhodospira halophila SL1.</title>
        <authorList>
            <consortium name="US DOE Joint Genome Institute"/>
            <person name="Copeland A."/>
            <person name="Lucas S."/>
            <person name="Lapidus A."/>
            <person name="Barry K."/>
            <person name="Detter J.C."/>
            <person name="Glavina del Rio T."/>
            <person name="Hammon N."/>
            <person name="Israni S."/>
            <person name="Dalin E."/>
            <person name="Tice H."/>
            <person name="Pitluck S."/>
            <person name="Saunders E."/>
            <person name="Brettin T."/>
            <person name="Bruce D."/>
            <person name="Han C."/>
            <person name="Tapia R."/>
            <person name="Schmutz J."/>
            <person name="Larimer F."/>
            <person name="Land M."/>
            <person name="Hauser L."/>
            <person name="Kyrpides N."/>
            <person name="Mikhailova N."/>
            <person name="Hoff W."/>
            <person name="Richardson P."/>
        </authorList>
    </citation>
    <scope>NUCLEOTIDE SEQUENCE [LARGE SCALE GENOMIC DNA]</scope>
    <source>
        <strain>DSM 244 / SL1</strain>
    </source>
</reference>
<name>RNPA_HALHL</name>
<comment type="function">
    <text evidence="1">RNaseP catalyzes the removal of the 5'-leader sequence from pre-tRNA to produce the mature 5'-terminus. It can also cleave other RNA substrates such as 4.5S RNA. The protein component plays an auxiliary but essential role in vivo by binding to the 5'-leader sequence and broadening the substrate specificity of the ribozyme.</text>
</comment>
<comment type="catalytic activity">
    <reaction evidence="1">
        <text>Endonucleolytic cleavage of RNA, removing 5'-extranucleotides from tRNA precursor.</text>
        <dbReference type="EC" id="3.1.26.5"/>
    </reaction>
</comment>
<comment type="subunit">
    <text evidence="1">Consists of a catalytic RNA component (M1 or rnpB) and a protein subunit.</text>
</comment>
<comment type="similarity">
    <text evidence="1">Belongs to the RnpA family.</text>
</comment>
<keyword id="KW-0255">Endonuclease</keyword>
<keyword id="KW-0378">Hydrolase</keyword>
<keyword id="KW-0540">Nuclease</keyword>
<keyword id="KW-1185">Reference proteome</keyword>
<keyword id="KW-0694">RNA-binding</keyword>
<keyword id="KW-0819">tRNA processing</keyword>
<organism>
    <name type="scientific">Halorhodospira halophila (strain DSM 244 / SL1)</name>
    <name type="common">Ectothiorhodospira halophila (strain DSM 244 / SL1)</name>
    <dbReference type="NCBI Taxonomy" id="349124"/>
    <lineage>
        <taxon>Bacteria</taxon>
        <taxon>Pseudomonadati</taxon>
        <taxon>Pseudomonadota</taxon>
        <taxon>Gammaproteobacteria</taxon>
        <taxon>Chromatiales</taxon>
        <taxon>Ectothiorhodospiraceae</taxon>
        <taxon>Halorhodospira</taxon>
    </lineage>
</organism>
<sequence>MSADERFPRGARLLRRREFEGVLRAPEWRTANRYFRVSARQNQCGRPRLGLAVPKRVLRLAIQRHRVKRIIRESFRVRQGGLPDHDFVVGVRGAVAEADNATLFSALEELWAHARGRPCDGS</sequence>
<protein>
    <recommendedName>
        <fullName evidence="1">Ribonuclease P protein component</fullName>
        <shortName evidence="1">RNase P protein</shortName>
        <shortName evidence="1">RNaseP protein</shortName>
        <ecNumber evidence="1">3.1.26.5</ecNumber>
    </recommendedName>
    <alternativeName>
        <fullName evidence="1">Protein C5</fullName>
    </alternativeName>
</protein>
<accession>A1WWE2</accession>